<sequence>MQLYTYLYLLVPLVTFHLILGTGTLDHGDALTERRSTDATALKPEPVLLQKSSARSTNDNGKDTQMKRILKKRGNKARGEEELAEKAPEFARELAN</sequence>
<dbReference type="PDB" id="2MYZ">
    <property type="method" value="NMR"/>
    <property type="chains" value="A=79-96"/>
</dbReference>
<dbReference type="PDB" id="2MZK">
    <property type="method" value="NMR"/>
    <property type="chains" value="A=79-96"/>
</dbReference>
<dbReference type="PDB" id="5TBG">
    <property type="method" value="NMR"/>
    <property type="chains" value="A=79-96"/>
</dbReference>
<dbReference type="PDB" id="5TBQ">
    <property type="method" value="NMR"/>
    <property type="chains" value="A=79-96"/>
</dbReference>
<dbReference type="PDB" id="5TBR">
    <property type="method" value="NMR"/>
    <property type="chains" value="A=79-96"/>
</dbReference>
<dbReference type="PDBsum" id="2MYZ"/>
<dbReference type="PDBsum" id="2MZK"/>
<dbReference type="PDBsum" id="5TBG"/>
<dbReference type="PDBsum" id="5TBQ"/>
<dbReference type="PDBsum" id="5TBR"/>
<dbReference type="BMRB" id="P0DKZ0"/>
<dbReference type="SMR" id="P0DKZ0"/>
<dbReference type="ConoServer" id="5849">
    <property type="toxin name" value="Conantokin-Rl2 precursor"/>
</dbReference>
<dbReference type="EvolutionaryTrace" id="P0DKZ0"/>
<dbReference type="GO" id="GO:0005576">
    <property type="term" value="C:extracellular region"/>
    <property type="evidence" value="ECO:0007669"/>
    <property type="project" value="UniProtKB-SubCell"/>
</dbReference>
<dbReference type="GO" id="GO:0035792">
    <property type="term" value="C:host cell postsynaptic membrane"/>
    <property type="evidence" value="ECO:0007669"/>
    <property type="project" value="UniProtKB-KW"/>
</dbReference>
<dbReference type="GO" id="GO:0099106">
    <property type="term" value="F:ion channel regulator activity"/>
    <property type="evidence" value="ECO:0007669"/>
    <property type="project" value="UniProtKB-KW"/>
</dbReference>
<dbReference type="GO" id="GO:0046872">
    <property type="term" value="F:metal ion binding"/>
    <property type="evidence" value="ECO:0007669"/>
    <property type="project" value="UniProtKB-KW"/>
</dbReference>
<dbReference type="GO" id="GO:0090729">
    <property type="term" value="F:toxin activity"/>
    <property type="evidence" value="ECO:0007669"/>
    <property type="project" value="UniProtKB-KW"/>
</dbReference>
<dbReference type="InterPro" id="IPR005918">
    <property type="entry name" value="Conantokin_CS"/>
</dbReference>
<dbReference type="PROSITE" id="PS60025">
    <property type="entry name" value="CONANTOKIN"/>
    <property type="match status" value="1"/>
</dbReference>
<organism>
    <name type="scientific">Conus rolani</name>
    <name type="common">Cone snail</name>
    <dbReference type="NCBI Taxonomy" id="745791"/>
    <lineage>
        <taxon>Eukaryota</taxon>
        <taxon>Metazoa</taxon>
        <taxon>Spiralia</taxon>
        <taxon>Lophotrochozoa</taxon>
        <taxon>Mollusca</taxon>
        <taxon>Gastropoda</taxon>
        <taxon>Caenogastropoda</taxon>
        <taxon>Neogastropoda</taxon>
        <taxon>Conoidea</taxon>
        <taxon>Conidae</taxon>
        <taxon>Conus</taxon>
        <taxon>Asprella</taxon>
    </lineage>
</organism>
<name>CKR1B_CONRO</name>
<proteinExistence type="inferred from homology"/>
<keyword id="KW-0002">3D-structure</keyword>
<keyword id="KW-0027">Amidation</keyword>
<keyword id="KW-0106">Calcium</keyword>
<keyword id="KW-0301">Gamma-carboxyglutamic acid</keyword>
<keyword id="KW-0379">Hydroxylation</keyword>
<keyword id="KW-0872">Ion channel impairing toxin</keyword>
<keyword id="KW-1028">Ionotropic glutamate receptor inhibitor</keyword>
<keyword id="KW-0460">Magnesium</keyword>
<keyword id="KW-0479">Metal-binding</keyword>
<keyword id="KW-0528">Neurotoxin</keyword>
<keyword id="KW-0629">Postsynaptic neurotoxin</keyword>
<keyword id="KW-0964">Secreted</keyword>
<keyword id="KW-0732">Signal</keyword>
<keyword id="KW-0800">Toxin</keyword>
<feature type="signal peptide" evidence="2">
    <location>
        <begin position="1"/>
        <end position="21"/>
    </location>
</feature>
<feature type="propeptide" id="PRO_0000421894" evidence="10">
    <location>
        <begin position="22"/>
        <end position="78"/>
    </location>
</feature>
<feature type="peptide" id="PRO_0000421895" description="Conantokin Rl-B" evidence="10">
    <location>
        <begin position="79"/>
        <end position="96"/>
    </location>
</feature>
<feature type="region of interest" description="Disordered" evidence="3">
    <location>
        <begin position="51"/>
        <end position="96"/>
    </location>
</feature>
<feature type="compositionally biased region" description="Basic and acidic residues" evidence="3">
    <location>
        <begin position="77"/>
        <end position="96"/>
    </location>
</feature>
<feature type="binding site" description="via 4-carboxyglutamate" evidence="5">
    <location>
        <position position="81"/>
    </location>
    <ligand>
        <name>a divalent metal cation</name>
        <dbReference type="ChEBI" id="CHEBI:60240"/>
    </ligand>
</feature>
<feature type="binding site" description="via 4-carboxyglutamate" evidence="5">
    <location>
        <position position="85"/>
    </location>
    <ligand>
        <name>a divalent metal cation</name>
        <dbReference type="ChEBI" id="CHEBI:60240"/>
    </ligand>
</feature>
<feature type="binding site" description="via 4-carboxyglutamate" evidence="5">
    <location>
        <position position="89"/>
    </location>
    <ligand>
        <name>a divalent metal cation</name>
        <dbReference type="ChEBI" id="CHEBI:60240"/>
    </ligand>
</feature>
<feature type="binding site" description="via 4-carboxyglutamate" evidence="5">
    <location>
        <position position="93"/>
    </location>
    <ligand>
        <name>a divalent metal cation</name>
        <dbReference type="ChEBI" id="CHEBI:60240"/>
    </ligand>
</feature>
<feature type="site" description="Important for selectivity" evidence="10 11 12">
    <location>
        <position position="86"/>
    </location>
</feature>
<feature type="site" description="Important for activity (Pro and hydroxyPro)" evidence="10 11 12">
    <location>
        <position position="88"/>
    </location>
</feature>
<feature type="modified residue" description="4-carboxyglutamate" evidence="1 10">
    <location>
        <position position="81"/>
    </location>
</feature>
<feature type="modified residue" description="4-carboxyglutamate" evidence="1 10">
    <location>
        <position position="82"/>
    </location>
</feature>
<feature type="modified residue" description="4-carboxyglutamate" evidence="1 10">
    <location>
        <position position="85"/>
    </location>
</feature>
<feature type="modified residue" description="4-hydroxyproline" evidence="10">
    <location>
        <position position="88"/>
    </location>
</feature>
<feature type="modified residue" description="4-carboxyglutamate" evidence="1 10">
    <location>
        <position position="89"/>
    </location>
</feature>
<feature type="modified residue" description="4-carboxyglutamate" evidence="1 10">
    <location>
        <position position="93"/>
    </location>
</feature>
<feature type="modified residue" description="Asparagine amide" evidence="1 10">
    <location>
        <position position="96"/>
    </location>
</feature>
<feature type="mutagenesis site" description="No change in activity." evidence="4">
    <original>L</original>
    <variation>Y</variation>
    <location>
        <position position="83"/>
    </location>
</feature>
<feature type="mutagenesis site" description="No change in activity." evidence="4">
    <original>E</original>
    <variation>K</variation>
    <location>
        <position position="85"/>
    </location>
</feature>
<feature type="mutagenesis site" description="Loss of inhibition of NMDA receptors from mouse cortical neurons." evidence="5 13">
    <original>KAP</original>
    <variation>NQ</variation>
    <location>
        <begin position="86"/>
        <end position="88"/>
    </location>
</feature>
<feature type="mutagenesis site" description="Decrease in inhibitory potency on NMDA receptors, but no loss in NR2B/GRIN2B NMDA receptor selectivity." evidence="6 15">
    <original>P</original>
    <variation>A</variation>
    <location>
        <position position="88"/>
    </location>
</feature>
<feature type="mutagenesis site" description="Decrease in inhibitory potency on NMDA receptors." evidence="6 14">
    <location>
        <position position="88"/>
    </location>
</feature>
<feature type="mutagenesis site" description="No change in activity." evidence="4">
    <original>E</original>
    <variation>K</variation>
    <location>
        <position position="93"/>
    </location>
</feature>
<feature type="non-terminal residue">
    <location>
        <position position="96"/>
    </location>
</feature>
<feature type="helix" evidence="16">
    <location>
        <begin position="80"/>
        <end position="84"/>
    </location>
</feature>
<feature type="helix" evidence="16">
    <location>
        <begin position="86"/>
        <end position="93"/>
    </location>
</feature>
<feature type="turn" evidence="17">
    <location>
        <begin position="94"/>
        <end position="96"/>
    </location>
</feature>
<comment type="function">
    <text evidence="4 5 6">Conantokins inhibit N-methyl-D-aspartate (NMDA) receptors. This toxin has antagonist activity on the NR2B/GRIN2B subunit (IC(50)=0.1 uM) (PubMed:22594498, PubMed:26048991, PubMed:27981829). In vivo, when delivered into the brain, is active has anticonvulsant activity in the model of epilepsy in mice (PubMed:22594498).</text>
</comment>
<comment type="cofactor">
    <cofactor evidence="4">
        <name>Ca(2+)</name>
        <dbReference type="ChEBI" id="CHEBI:29108"/>
    </cofactor>
    <cofactor evidence="5">
        <name>Mg(2+)</name>
        <dbReference type="ChEBI" id="CHEBI:18420"/>
    </cofactor>
    <text evidence="4 5">Divalent cations stabilize the toxin the in alpha-helix conformation.</text>
</comment>
<comment type="subcellular location">
    <subcellularLocation>
        <location evidence="9">Secreted</location>
    </subcellularLocation>
</comment>
<comment type="tissue specificity">
    <text evidence="9">Expressed by the venom duct.</text>
</comment>
<comment type="PTM">
    <text evidence="5 6">Hydroxylation of Pro-88 is important for NR2B/GRIN2B NMDA receptor selectivity (PubMed:26048991, PubMed:27981829). Removal of hydroxylation does not change global NMDA receptor antagonism (tested on WT neurons), but it decreases the inhibitory potency on NR2B/GRIN2B NMDA receptors and increases the inhibitory potency on NR2A/GRIN2A NMDA receptors. Hydroxylation of Pro-88 locally disrupts a small region of the divalent cation-induced alpha-helix but does not destabilize the entire helix (PubMed:26048991, PubMed:27981829).</text>
</comment>
<comment type="miscellaneous">
    <text evidence="9">The mature peptide does not contain cysteine residue.</text>
</comment>
<comment type="miscellaneous">
    <text evidence="4">Negative results: has no or very weak antagonist activity on NR2A/GRIN2A, NR2C/GRIN2C, and NR2D/GRIN2D subunits.</text>
</comment>
<comment type="similarity">
    <text evidence="9">Belongs to the conotoxin B superfamily.</text>
</comment>
<evidence type="ECO:0000250" key="1">
    <source>
        <dbReference type="UniProtKB" id="P07231"/>
    </source>
</evidence>
<evidence type="ECO:0000255" key="2"/>
<evidence type="ECO:0000256" key="3">
    <source>
        <dbReference type="SAM" id="MobiDB-lite"/>
    </source>
</evidence>
<evidence type="ECO:0000269" key="4">
    <source>
    </source>
</evidence>
<evidence type="ECO:0000269" key="5">
    <source>
    </source>
</evidence>
<evidence type="ECO:0000269" key="6">
    <source>
    </source>
</evidence>
<evidence type="ECO:0000303" key="7">
    <source>
    </source>
</evidence>
<evidence type="ECO:0000303" key="8">
    <source>
    </source>
</evidence>
<evidence type="ECO:0000305" key="9"/>
<evidence type="ECO:0000305" key="10">
    <source>
    </source>
</evidence>
<evidence type="ECO:0000305" key="11">
    <source>
    </source>
</evidence>
<evidence type="ECO:0000305" key="12">
    <source>
    </source>
</evidence>
<evidence type="ECO:0000312" key="13">
    <source>
        <dbReference type="PDB" id="2MYZ"/>
    </source>
</evidence>
<evidence type="ECO:0000312" key="14">
    <source>
        <dbReference type="PDB" id="5TBQ"/>
    </source>
</evidence>
<evidence type="ECO:0000312" key="15">
    <source>
        <dbReference type="PDB" id="5TBR"/>
    </source>
</evidence>
<evidence type="ECO:0007829" key="16">
    <source>
        <dbReference type="PDB" id="2MYZ"/>
    </source>
</evidence>
<evidence type="ECO:0007829" key="17">
    <source>
        <dbReference type="PDB" id="5TBQ"/>
    </source>
</evidence>
<reference key="1">
    <citation type="journal article" date="2012" name="Biochemistry">
        <title>Conantokins derived from the Asprella clade impart conRl-B, an N-methyl d-aspartate receptor antagonist with a unique selectivity profile for NR2B subunits.</title>
        <authorList>
            <person name="Gowd K.H."/>
            <person name="Han T.S."/>
            <person name="Twede V."/>
            <person name="Gajewiak J."/>
            <person name="Smith M.D."/>
            <person name="Watkins M."/>
            <person name="Platt R.J."/>
            <person name="Toledo G."/>
            <person name="White H.S."/>
            <person name="Olivera B.M."/>
            <person name="Bulaj G."/>
        </authorList>
    </citation>
    <scope>NUCLEOTIDE SEQUENCE [GENOMIC DNA]</scope>
    <scope>SYNTHESIS OF 79-96</scope>
    <scope>FUNCTION</scope>
    <scope>BIOASSAY</scope>
    <scope>MUTAGENESIS OF LEU-83; GLU-85 AND GLU-93</scope>
    <scope>SITES</scope>
    <scope>CIRCULAR DICHROISM ANALYSIS</scope>
    <scope>GAMMA-CARBOXYGLUTAMATION AT GLU-81; GLU-82; GLU-85; GLU-89 AND GLU-93</scope>
    <scope>HYDROXYLATION AT PRO-88</scope>
    <scope>AMIDATION AT ASN-96</scope>
    <scope>COFACTOR</scope>
</reference>
<reference key="2">
    <citation type="journal article" date="2015" name="J. Biol. Chem.">
        <title>Hydroxyproline-induced helical disruption in conantokin Rl-B affects subunit-selective antagonistic activities toward ion channels of N-methyl-D-aspartate receptors.</title>
        <authorList>
            <person name="Kunda S."/>
            <person name="Yuan Y."/>
            <person name="Balsara R.D."/>
            <person name="Zajicek J."/>
            <person name="Castellino F.J."/>
        </authorList>
    </citation>
    <scope>STRUCTURE BY NMR OF WILD-TYPE AND MUTANT</scope>
    <scope>METAL-BINDING SITES</scope>
    <scope>FUNCTION</scope>
    <scope>MUTAGENESIS OF 86-LYS--PRO-89</scope>
    <scope>COFACTOR</scope>
</reference>
<reference key="3">
    <citation type="journal article" date="2016" name="Biochemistry">
        <title>Discerning the role of the hydroxyproline residue in the structure of conantokin Rl-B and its role in GluN2B subunit-selective antagonistic activity toward N-methyl-D-aspartate receptors.</title>
        <authorList>
            <person name="Yuan Y."/>
            <person name="Balsara R.D."/>
            <person name="Zajicek J."/>
            <person name="Kunda S."/>
            <person name="Castellino F.J."/>
        </authorList>
    </citation>
    <scope>STRUCTURE BY NMR OF MUTANTS PRO-88</scope>
    <scope>MUTAGENESIS OF PRO-88</scope>
    <scope>FUNCTION</scope>
    <scope>FUNCTION OF MUTANTS PRO-88</scope>
</reference>
<protein>
    <recommendedName>
        <fullName evidence="9">Conantokin Rl-B</fullName>
        <shortName evidence="8">Con Rl-B</shortName>
        <shortName evidence="7 8">ConRl-B</shortName>
    </recommendedName>
</protein>
<accession>P0DKZ0</accession>